<feature type="chain" id="PRO_0000138008" description="Glycerol-3-phosphate dehydrogenase [NAD(P)+]">
    <location>
        <begin position="1"/>
        <end position="340"/>
    </location>
</feature>
<feature type="active site" description="Proton acceptor" evidence="1">
    <location>
        <position position="191"/>
    </location>
</feature>
<feature type="binding site" evidence="1">
    <location>
        <position position="14"/>
    </location>
    <ligand>
        <name>NADPH</name>
        <dbReference type="ChEBI" id="CHEBI:57783"/>
    </ligand>
</feature>
<feature type="binding site" evidence="1">
    <location>
        <position position="15"/>
    </location>
    <ligand>
        <name>NADPH</name>
        <dbReference type="ChEBI" id="CHEBI:57783"/>
    </ligand>
</feature>
<feature type="binding site" evidence="1">
    <location>
        <position position="35"/>
    </location>
    <ligand>
        <name>NADPH</name>
        <dbReference type="ChEBI" id="CHEBI:57783"/>
    </ligand>
</feature>
<feature type="binding site" evidence="1">
    <location>
        <position position="108"/>
    </location>
    <ligand>
        <name>NADPH</name>
        <dbReference type="ChEBI" id="CHEBI:57783"/>
    </ligand>
</feature>
<feature type="binding site" evidence="1">
    <location>
        <position position="108"/>
    </location>
    <ligand>
        <name>sn-glycerol 3-phosphate</name>
        <dbReference type="ChEBI" id="CHEBI:57597"/>
    </ligand>
</feature>
<feature type="binding site" evidence="1">
    <location>
        <position position="136"/>
    </location>
    <ligand>
        <name>sn-glycerol 3-phosphate</name>
        <dbReference type="ChEBI" id="CHEBI:57597"/>
    </ligand>
</feature>
<feature type="binding site" evidence="1">
    <location>
        <position position="140"/>
    </location>
    <ligand>
        <name>NADPH</name>
        <dbReference type="ChEBI" id="CHEBI:57783"/>
    </ligand>
</feature>
<feature type="binding site" evidence="1">
    <location>
        <position position="191"/>
    </location>
    <ligand>
        <name>sn-glycerol 3-phosphate</name>
        <dbReference type="ChEBI" id="CHEBI:57597"/>
    </ligand>
</feature>
<feature type="binding site" evidence="1">
    <location>
        <position position="244"/>
    </location>
    <ligand>
        <name>sn-glycerol 3-phosphate</name>
        <dbReference type="ChEBI" id="CHEBI:57597"/>
    </ligand>
</feature>
<feature type="binding site" evidence="1">
    <location>
        <position position="254"/>
    </location>
    <ligand>
        <name>sn-glycerol 3-phosphate</name>
        <dbReference type="ChEBI" id="CHEBI:57597"/>
    </ligand>
</feature>
<feature type="binding site" evidence="1">
    <location>
        <position position="255"/>
    </location>
    <ligand>
        <name>NADPH</name>
        <dbReference type="ChEBI" id="CHEBI:57783"/>
    </ligand>
</feature>
<feature type="binding site" evidence="1">
    <location>
        <position position="255"/>
    </location>
    <ligand>
        <name>sn-glycerol 3-phosphate</name>
        <dbReference type="ChEBI" id="CHEBI:57597"/>
    </ligand>
</feature>
<feature type="binding site" evidence="1">
    <location>
        <position position="256"/>
    </location>
    <ligand>
        <name>sn-glycerol 3-phosphate</name>
        <dbReference type="ChEBI" id="CHEBI:57597"/>
    </ligand>
</feature>
<feature type="binding site" evidence="1">
    <location>
        <position position="281"/>
    </location>
    <ligand>
        <name>NADPH</name>
        <dbReference type="ChEBI" id="CHEBI:57783"/>
    </ligand>
</feature>
<keyword id="KW-0963">Cytoplasm</keyword>
<keyword id="KW-0444">Lipid biosynthesis</keyword>
<keyword id="KW-0443">Lipid metabolism</keyword>
<keyword id="KW-0520">NAD</keyword>
<keyword id="KW-0521">NADP</keyword>
<keyword id="KW-0547">Nucleotide-binding</keyword>
<keyword id="KW-0560">Oxidoreductase</keyword>
<keyword id="KW-0594">Phospholipid biosynthesis</keyword>
<keyword id="KW-1208">Phospholipid metabolism</keyword>
<keyword id="KW-1185">Reference proteome</keyword>
<evidence type="ECO:0000255" key="1">
    <source>
        <dbReference type="HAMAP-Rule" id="MF_00394"/>
    </source>
</evidence>
<sequence length="340" mass="36773">MTEQQPIAVLGGGSFGTAIANLLAENGQAVRQWMRDPEQAEAIRTRRENPRYLKGVKVHPGVDPVTDLERTLADCQLIFVALPSSALRKVLQPHQAALTDKLLVSLTKGIEAHTFKLMSEILEEIAPQARIGVISGPNLAREIAEHELTATVVASEDDELCARVQAALHGRTFRVYASRDRFGVELGGALKNVYAIMAGLAAAMDMGENTRSMLITRALAEMTRFAVKLGANPMTFLGLAGVGDLIVTCSSPKSRNYQVGHALGEGLSLEEAVSRMGETAEGVNTLKVLKEKSDEMQVYMPLVAGLHAILFEGRTLAQVIQLLMRGEPKTDVDFIPTTGF</sequence>
<name>GPDA_PSEAE</name>
<comment type="function">
    <text evidence="1">Catalyzes the reduction of the glycolytic intermediate dihydroxyacetone phosphate (DHAP) to sn-glycerol 3-phosphate (G3P), the key precursor for phospholipid synthesis.</text>
</comment>
<comment type="catalytic activity">
    <reaction evidence="1">
        <text>sn-glycerol 3-phosphate + NAD(+) = dihydroxyacetone phosphate + NADH + H(+)</text>
        <dbReference type="Rhea" id="RHEA:11092"/>
        <dbReference type="ChEBI" id="CHEBI:15378"/>
        <dbReference type="ChEBI" id="CHEBI:57540"/>
        <dbReference type="ChEBI" id="CHEBI:57597"/>
        <dbReference type="ChEBI" id="CHEBI:57642"/>
        <dbReference type="ChEBI" id="CHEBI:57945"/>
        <dbReference type="EC" id="1.1.1.94"/>
    </reaction>
    <physiologicalReaction direction="right-to-left" evidence="1">
        <dbReference type="Rhea" id="RHEA:11094"/>
    </physiologicalReaction>
</comment>
<comment type="catalytic activity">
    <reaction evidence="1">
        <text>sn-glycerol 3-phosphate + NADP(+) = dihydroxyacetone phosphate + NADPH + H(+)</text>
        <dbReference type="Rhea" id="RHEA:11096"/>
        <dbReference type="ChEBI" id="CHEBI:15378"/>
        <dbReference type="ChEBI" id="CHEBI:57597"/>
        <dbReference type="ChEBI" id="CHEBI:57642"/>
        <dbReference type="ChEBI" id="CHEBI:57783"/>
        <dbReference type="ChEBI" id="CHEBI:58349"/>
        <dbReference type="EC" id="1.1.1.94"/>
    </reaction>
    <physiologicalReaction direction="right-to-left" evidence="1">
        <dbReference type="Rhea" id="RHEA:11098"/>
    </physiologicalReaction>
</comment>
<comment type="pathway">
    <text evidence="1">Membrane lipid metabolism; glycerophospholipid metabolism.</text>
</comment>
<comment type="subcellular location">
    <subcellularLocation>
        <location evidence="1">Cytoplasm</location>
    </subcellularLocation>
</comment>
<comment type="similarity">
    <text evidence="1">Belongs to the NAD-dependent glycerol-3-phosphate dehydrogenase family.</text>
</comment>
<organism>
    <name type="scientific">Pseudomonas aeruginosa (strain ATCC 15692 / DSM 22644 / CIP 104116 / JCM 14847 / LMG 12228 / 1C / PRS 101 / PAO1)</name>
    <dbReference type="NCBI Taxonomy" id="208964"/>
    <lineage>
        <taxon>Bacteria</taxon>
        <taxon>Pseudomonadati</taxon>
        <taxon>Pseudomonadota</taxon>
        <taxon>Gammaproteobacteria</taxon>
        <taxon>Pseudomonadales</taxon>
        <taxon>Pseudomonadaceae</taxon>
        <taxon>Pseudomonas</taxon>
    </lineage>
</organism>
<protein>
    <recommendedName>
        <fullName evidence="1">Glycerol-3-phosphate dehydrogenase [NAD(P)+]</fullName>
        <ecNumber evidence="1">1.1.1.94</ecNumber>
    </recommendedName>
    <alternativeName>
        <fullName evidence="1">NAD(P)(+)-dependent glycerol-3-phosphate dehydrogenase</fullName>
    </alternativeName>
    <alternativeName>
        <fullName evidence="1">NAD(P)H-dependent dihydroxyacetone-phosphate reductase</fullName>
    </alternativeName>
</protein>
<accession>Q9I3A8</accession>
<gene>
    <name evidence="1" type="primary">gpsA</name>
    <name type="ordered locus">PA1614</name>
</gene>
<dbReference type="EC" id="1.1.1.94" evidence="1"/>
<dbReference type="EMBL" id="AE004091">
    <property type="protein sequence ID" value="AAG05003.1"/>
    <property type="molecule type" value="Genomic_DNA"/>
</dbReference>
<dbReference type="PIR" id="H83443">
    <property type="entry name" value="H83443"/>
</dbReference>
<dbReference type="RefSeq" id="NP_250305.1">
    <property type="nucleotide sequence ID" value="NC_002516.2"/>
</dbReference>
<dbReference type="RefSeq" id="WP_003109958.1">
    <property type="nucleotide sequence ID" value="NZ_QZGE01000003.1"/>
</dbReference>
<dbReference type="SMR" id="Q9I3A8"/>
<dbReference type="FunCoup" id="Q9I3A8">
    <property type="interactions" value="605"/>
</dbReference>
<dbReference type="STRING" id="208964.PA1614"/>
<dbReference type="PaxDb" id="208964-PA1614"/>
<dbReference type="DNASU" id="881904"/>
<dbReference type="GeneID" id="881904"/>
<dbReference type="KEGG" id="pae:PA1614"/>
<dbReference type="PATRIC" id="fig|208964.12.peg.1674"/>
<dbReference type="PseudoCAP" id="PA1614"/>
<dbReference type="HOGENOM" id="CLU_033449_0_2_6"/>
<dbReference type="InParanoid" id="Q9I3A8"/>
<dbReference type="OrthoDB" id="9812273at2"/>
<dbReference type="PhylomeDB" id="Q9I3A8"/>
<dbReference type="BioCyc" id="PAER208964:G1FZ6-1644-MONOMER"/>
<dbReference type="UniPathway" id="UPA00940"/>
<dbReference type="Proteomes" id="UP000002438">
    <property type="component" value="Chromosome"/>
</dbReference>
<dbReference type="GO" id="GO:0005829">
    <property type="term" value="C:cytosol"/>
    <property type="evidence" value="ECO:0000318"/>
    <property type="project" value="GO_Central"/>
</dbReference>
<dbReference type="GO" id="GO:0047952">
    <property type="term" value="F:glycerol-3-phosphate dehydrogenase [NAD(P)+] activity"/>
    <property type="evidence" value="ECO:0000318"/>
    <property type="project" value="GO_Central"/>
</dbReference>
<dbReference type="GO" id="GO:0051287">
    <property type="term" value="F:NAD binding"/>
    <property type="evidence" value="ECO:0007669"/>
    <property type="project" value="InterPro"/>
</dbReference>
<dbReference type="GO" id="GO:0005975">
    <property type="term" value="P:carbohydrate metabolic process"/>
    <property type="evidence" value="ECO:0007669"/>
    <property type="project" value="InterPro"/>
</dbReference>
<dbReference type="GO" id="GO:0046167">
    <property type="term" value="P:glycerol-3-phosphate biosynthetic process"/>
    <property type="evidence" value="ECO:0007669"/>
    <property type="project" value="UniProtKB-UniRule"/>
</dbReference>
<dbReference type="GO" id="GO:0046168">
    <property type="term" value="P:glycerol-3-phosphate catabolic process"/>
    <property type="evidence" value="ECO:0007669"/>
    <property type="project" value="InterPro"/>
</dbReference>
<dbReference type="GO" id="GO:0006072">
    <property type="term" value="P:glycerol-3-phosphate metabolic process"/>
    <property type="evidence" value="ECO:0000318"/>
    <property type="project" value="GO_Central"/>
</dbReference>
<dbReference type="GO" id="GO:0046474">
    <property type="term" value="P:glycerophospholipid biosynthetic process"/>
    <property type="evidence" value="ECO:0000318"/>
    <property type="project" value="GO_Central"/>
</dbReference>
<dbReference type="FunFam" id="1.10.1040.10:FF:000001">
    <property type="entry name" value="Glycerol-3-phosphate dehydrogenase [NAD(P)+]"/>
    <property type="match status" value="1"/>
</dbReference>
<dbReference type="FunFam" id="3.40.50.720:FF:000019">
    <property type="entry name" value="Glycerol-3-phosphate dehydrogenase [NAD(P)+]"/>
    <property type="match status" value="1"/>
</dbReference>
<dbReference type="Gene3D" id="1.10.1040.10">
    <property type="entry name" value="N-(1-d-carboxylethyl)-l-norvaline Dehydrogenase, domain 2"/>
    <property type="match status" value="1"/>
</dbReference>
<dbReference type="Gene3D" id="3.40.50.720">
    <property type="entry name" value="NAD(P)-binding Rossmann-like Domain"/>
    <property type="match status" value="1"/>
</dbReference>
<dbReference type="HAMAP" id="MF_00394">
    <property type="entry name" value="NAD_Glyc3P_dehydrog"/>
    <property type="match status" value="1"/>
</dbReference>
<dbReference type="InterPro" id="IPR008927">
    <property type="entry name" value="6-PGluconate_DH-like_C_sf"/>
</dbReference>
<dbReference type="InterPro" id="IPR013328">
    <property type="entry name" value="6PGD_dom2"/>
</dbReference>
<dbReference type="InterPro" id="IPR006168">
    <property type="entry name" value="G3P_DH_NAD-dep"/>
</dbReference>
<dbReference type="InterPro" id="IPR006109">
    <property type="entry name" value="G3P_DH_NAD-dep_C"/>
</dbReference>
<dbReference type="InterPro" id="IPR011128">
    <property type="entry name" value="G3P_DH_NAD-dep_N"/>
</dbReference>
<dbReference type="InterPro" id="IPR036291">
    <property type="entry name" value="NAD(P)-bd_dom_sf"/>
</dbReference>
<dbReference type="NCBIfam" id="NF000940">
    <property type="entry name" value="PRK00094.1-2"/>
    <property type="match status" value="1"/>
</dbReference>
<dbReference type="NCBIfam" id="NF000942">
    <property type="entry name" value="PRK00094.1-4"/>
    <property type="match status" value="1"/>
</dbReference>
<dbReference type="NCBIfam" id="NF000946">
    <property type="entry name" value="PRK00094.2-4"/>
    <property type="match status" value="1"/>
</dbReference>
<dbReference type="PANTHER" id="PTHR11728">
    <property type="entry name" value="GLYCEROL-3-PHOSPHATE DEHYDROGENASE"/>
    <property type="match status" value="1"/>
</dbReference>
<dbReference type="PANTHER" id="PTHR11728:SF1">
    <property type="entry name" value="GLYCEROL-3-PHOSPHATE DEHYDROGENASE [NAD(+)] 2, CHLOROPLASTIC"/>
    <property type="match status" value="1"/>
</dbReference>
<dbReference type="Pfam" id="PF07479">
    <property type="entry name" value="NAD_Gly3P_dh_C"/>
    <property type="match status" value="1"/>
</dbReference>
<dbReference type="Pfam" id="PF01210">
    <property type="entry name" value="NAD_Gly3P_dh_N"/>
    <property type="match status" value="1"/>
</dbReference>
<dbReference type="PIRSF" id="PIRSF000114">
    <property type="entry name" value="Glycerol-3-P_dh"/>
    <property type="match status" value="1"/>
</dbReference>
<dbReference type="PRINTS" id="PR00077">
    <property type="entry name" value="GPDHDRGNASE"/>
</dbReference>
<dbReference type="SUPFAM" id="SSF48179">
    <property type="entry name" value="6-phosphogluconate dehydrogenase C-terminal domain-like"/>
    <property type="match status" value="1"/>
</dbReference>
<dbReference type="SUPFAM" id="SSF51735">
    <property type="entry name" value="NAD(P)-binding Rossmann-fold domains"/>
    <property type="match status" value="1"/>
</dbReference>
<dbReference type="PROSITE" id="PS00957">
    <property type="entry name" value="NAD_G3PDH"/>
    <property type="match status" value="1"/>
</dbReference>
<reference key="1">
    <citation type="journal article" date="2000" name="Nature">
        <title>Complete genome sequence of Pseudomonas aeruginosa PAO1, an opportunistic pathogen.</title>
        <authorList>
            <person name="Stover C.K."/>
            <person name="Pham X.-Q.T."/>
            <person name="Erwin A.L."/>
            <person name="Mizoguchi S.D."/>
            <person name="Warrener P."/>
            <person name="Hickey M.J."/>
            <person name="Brinkman F.S.L."/>
            <person name="Hufnagle W.O."/>
            <person name="Kowalik D.J."/>
            <person name="Lagrou M."/>
            <person name="Garber R.L."/>
            <person name="Goltry L."/>
            <person name="Tolentino E."/>
            <person name="Westbrock-Wadman S."/>
            <person name="Yuan Y."/>
            <person name="Brody L.L."/>
            <person name="Coulter S.N."/>
            <person name="Folger K.R."/>
            <person name="Kas A."/>
            <person name="Larbig K."/>
            <person name="Lim R.M."/>
            <person name="Smith K.A."/>
            <person name="Spencer D.H."/>
            <person name="Wong G.K.-S."/>
            <person name="Wu Z."/>
            <person name="Paulsen I.T."/>
            <person name="Reizer J."/>
            <person name="Saier M.H. Jr."/>
            <person name="Hancock R.E.W."/>
            <person name="Lory S."/>
            <person name="Olson M.V."/>
        </authorList>
    </citation>
    <scope>NUCLEOTIDE SEQUENCE [LARGE SCALE GENOMIC DNA]</scope>
    <source>
        <strain>ATCC 15692 / DSM 22644 / CIP 104116 / JCM 14847 / LMG 12228 / 1C / PRS 101 / PAO1</strain>
    </source>
</reference>
<proteinExistence type="inferred from homology"/>